<name>NCAP_I85A4</name>
<gene>
    <name evidence="1" type="primary">NP</name>
</gene>
<organismHost>
    <name type="scientific">Aves</name>
    <dbReference type="NCBI Taxonomy" id="8782"/>
</organismHost>
<organismHost>
    <name type="scientific">Homo sapiens</name>
    <name type="common">Human</name>
    <dbReference type="NCBI Taxonomy" id="9606"/>
</organismHost>
<organismHost>
    <name type="scientific">Sus scrofa</name>
    <name type="common">Pig</name>
    <dbReference type="NCBI Taxonomy" id="9823"/>
</organismHost>
<keyword id="KW-0167">Capsid protein</keyword>
<keyword id="KW-1139">Helical capsid protein</keyword>
<keyword id="KW-1048">Host nucleus</keyword>
<keyword id="KW-0945">Host-virus interaction</keyword>
<keyword id="KW-0687">Ribonucleoprotein</keyword>
<keyword id="KW-0694">RNA-binding</keyword>
<keyword id="KW-0543">Viral nucleoprotein</keyword>
<keyword id="KW-1163">Viral penetration into host nucleus</keyword>
<keyword id="KW-0946">Virion</keyword>
<keyword id="KW-1160">Virus entry into host cell</keyword>
<reference key="1">
    <citation type="journal article" date="1990" name="J. Virol.">
        <title>Evolution of the nucleoprotein gene of influenza A virus.</title>
        <authorList>
            <person name="Gorman O.T."/>
            <person name="Bean W.J."/>
            <person name="Kawaoka Y."/>
            <person name="Webster R.G."/>
        </authorList>
    </citation>
    <scope>NUCLEOTIDE SEQUENCE [GENOMIC RNA]</scope>
</reference>
<comment type="function">
    <text evidence="1">Encapsidates the negative strand viral RNA, protecting it from nucleases. The encapsidated genomic RNA is termed the ribonucleoprotein (RNP) and serves as template for transcription and replication. The RNP needs to be localized in the host nucleus to start an infectious cycle, but is too large to diffuse through the nuclear pore complex. NP comprises at least 2 nuclear localization signals that are responsible for the active RNP import into the nucleus through cellular importin alpha/beta pathway. Later in the infection, nclear export of RNPs are mediated through viral proteins NEP interacting with M1 which binds nucleoproteins. It is possible that nucleoprotein binds directly host exportin-1/XPO1 and plays an active role in RNPs nuclear export. M1 interaction with RNP seems to hide nucleoprotein's nuclear localization signals. Soon after a virion infects a new cell, M1 dissociates from the RNP under acidification of the virion driven by M2 protein. Dissociation of M1 from RNP unmasks nucleoprotein's nuclear localization signals, targeting the RNP to the nucleus.</text>
</comment>
<comment type="subunit">
    <text evidence="1">Homomultimerizes to form the nucleocapsid. May bind host exportin-1/XPO1. Binds to viral genomic RNA. Protein-RNA contacts are mediated by a combination of electrostatic interactions between positively charged residues and the phosphate backbone and planar interactions between aromatic side chains and bases.</text>
</comment>
<comment type="subcellular location">
    <subcellularLocation>
        <location evidence="1">Virion</location>
    </subcellularLocation>
    <subcellularLocation>
        <location evidence="1">Host nucleus</location>
    </subcellularLocation>
</comment>
<comment type="PTM">
    <text evidence="1">Late in virus-infected cells, may be cleaved from a 56-kDa protein to a 53-kDa protein by a cellular caspase. This cleavage might be a marker for the onset of apoptosis in infected cells or have a specific function in virus host interaction.</text>
</comment>
<comment type="similarity">
    <text evidence="1">Belongs to the influenza viruses nucleoprotein family.</text>
</comment>
<sequence>MASQGTKRSYEQMETGGERQNATEIRASVGGMVGGIGRFYIQMCTELKLSDYEGRLIQNSITIERMVLSAFDERRNKYLEEHPSAGKDPKKTGGPIYKKRDGKWMRELILYDKEEIRRIWRQANNGEDATAGLTHLMIWHSNLNDATYQRTRALVRTGMDPRMCSLMQGSTLPRRSGAAGAAVKGVGTMVMELIRMIKRGINDRNFWRGENGRRTRIAYERMCNILKGKFQTAAQRAMMDQVRESRNPGNAEIEDLIFLARSALILRGSVAHKSCLPACVYGLVVASGYDFEREGYSLVGIDPFRLLQNSQVFSLIRPNENPAHKSQLVWMACHSAAFEDLRVSSFIRGTKVVPRGQLSTRGVQIASNENMETMDSSTLELRSKYWAIRTRSGGNTNQQRASAGQISVQPTFSVQRNLPFEKATIMAAFTGNTEGRTSDMRTEIIRMMESARPEDVSFQGRGVFELSDEKATNPIVPSFDMSNEGSYFFGDNAEEYDN</sequence>
<organism>
    <name type="scientific">Influenza A virus (strain A/Swine/Netherlands/12/1985 H1N1)</name>
    <dbReference type="NCBI Taxonomy" id="380347"/>
    <lineage>
        <taxon>Viruses</taxon>
        <taxon>Riboviria</taxon>
        <taxon>Orthornavirae</taxon>
        <taxon>Negarnaviricota</taxon>
        <taxon>Polyploviricotina</taxon>
        <taxon>Insthoviricetes</taxon>
        <taxon>Articulavirales</taxon>
        <taxon>Orthomyxoviridae</taxon>
        <taxon>Alphainfluenzavirus</taxon>
        <taxon>Alphainfluenzavirus influenzae</taxon>
        <taxon>Influenza A virus</taxon>
    </lineage>
</organism>
<proteinExistence type="inferred from homology"/>
<feature type="chain" id="PRO_0000079133" description="Nucleoprotein">
    <location>
        <begin position="1"/>
        <end position="498"/>
    </location>
</feature>
<feature type="region of interest" description="Disordered" evidence="2">
    <location>
        <begin position="1"/>
        <end position="21"/>
    </location>
</feature>
<feature type="short sequence motif" description="Unconventional nuclear localization signal" evidence="1">
    <location>
        <begin position="1"/>
        <end position="18"/>
    </location>
</feature>
<feature type="short sequence motif" description="Bipartite nuclear localization signal" evidence="1">
    <location>
        <begin position="198"/>
        <end position="216"/>
    </location>
</feature>
<evidence type="ECO:0000255" key="1">
    <source>
        <dbReference type="HAMAP-Rule" id="MF_04070"/>
    </source>
</evidence>
<evidence type="ECO:0000256" key="2">
    <source>
        <dbReference type="SAM" id="MobiDB-lite"/>
    </source>
</evidence>
<accession>P15678</accession>
<protein>
    <recommendedName>
        <fullName evidence="1">Nucleoprotein</fullName>
    </recommendedName>
    <alternativeName>
        <fullName evidence="1">Nucleocapsid protein</fullName>
        <shortName evidence="1">Protein N</shortName>
    </alternativeName>
</protein>
<dbReference type="EMBL" id="M30749">
    <property type="protein sequence ID" value="AAA43456.1"/>
    <property type="molecule type" value="Genomic_RNA"/>
</dbReference>
<dbReference type="SMR" id="P15678"/>
<dbReference type="GO" id="GO:0019029">
    <property type="term" value="C:helical viral capsid"/>
    <property type="evidence" value="ECO:0007669"/>
    <property type="project" value="UniProtKB-UniRule"/>
</dbReference>
<dbReference type="GO" id="GO:0043657">
    <property type="term" value="C:host cell"/>
    <property type="evidence" value="ECO:0007669"/>
    <property type="project" value="GOC"/>
</dbReference>
<dbReference type="GO" id="GO:0042025">
    <property type="term" value="C:host cell nucleus"/>
    <property type="evidence" value="ECO:0007669"/>
    <property type="project" value="UniProtKB-SubCell"/>
</dbReference>
<dbReference type="GO" id="GO:1990904">
    <property type="term" value="C:ribonucleoprotein complex"/>
    <property type="evidence" value="ECO:0007669"/>
    <property type="project" value="UniProtKB-KW"/>
</dbReference>
<dbReference type="GO" id="GO:0019013">
    <property type="term" value="C:viral nucleocapsid"/>
    <property type="evidence" value="ECO:0007669"/>
    <property type="project" value="UniProtKB-UniRule"/>
</dbReference>
<dbReference type="GO" id="GO:0003723">
    <property type="term" value="F:RNA binding"/>
    <property type="evidence" value="ECO:0007669"/>
    <property type="project" value="UniProtKB-UniRule"/>
</dbReference>
<dbReference type="GO" id="GO:0005198">
    <property type="term" value="F:structural molecule activity"/>
    <property type="evidence" value="ECO:0007669"/>
    <property type="project" value="UniProtKB-UniRule"/>
</dbReference>
<dbReference type="GO" id="GO:0046718">
    <property type="term" value="P:symbiont entry into host cell"/>
    <property type="evidence" value="ECO:0007669"/>
    <property type="project" value="UniProtKB-KW"/>
</dbReference>
<dbReference type="GO" id="GO:0075732">
    <property type="term" value="P:viral penetration into host nucleus"/>
    <property type="evidence" value="ECO:0007669"/>
    <property type="project" value="UniProtKB-UniRule"/>
</dbReference>
<dbReference type="HAMAP" id="MF_04070">
    <property type="entry name" value="INFV_NCAP"/>
    <property type="match status" value="1"/>
</dbReference>
<dbReference type="InterPro" id="IPR002141">
    <property type="entry name" value="Flu_NP"/>
</dbReference>
<dbReference type="Pfam" id="PF00506">
    <property type="entry name" value="Flu_NP"/>
    <property type="match status" value="1"/>
</dbReference>
<dbReference type="SUPFAM" id="SSF161003">
    <property type="entry name" value="flu NP-like"/>
    <property type="match status" value="1"/>
</dbReference>